<organism>
    <name type="scientific">Roseiflexus castenholzii (strain DSM 13941 / HLO8)</name>
    <dbReference type="NCBI Taxonomy" id="383372"/>
    <lineage>
        <taxon>Bacteria</taxon>
        <taxon>Bacillati</taxon>
        <taxon>Chloroflexota</taxon>
        <taxon>Chloroflexia</taxon>
        <taxon>Chloroflexales</taxon>
        <taxon>Roseiflexineae</taxon>
        <taxon>Roseiflexaceae</taxon>
        <taxon>Roseiflexus</taxon>
    </lineage>
</organism>
<dbReference type="EC" id="6.3.2.8" evidence="1"/>
<dbReference type="EMBL" id="CP000804">
    <property type="protein sequence ID" value="ABU57192.1"/>
    <property type="molecule type" value="Genomic_DNA"/>
</dbReference>
<dbReference type="RefSeq" id="WP_012119622.1">
    <property type="nucleotide sequence ID" value="NC_009767.1"/>
</dbReference>
<dbReference type="SMR" id="A7NI92"/>
<dbReference type="STRING" id="383372.Rcas_1093"/>
<dbReference type="KEGG" id="rca:Rcas_1093"/>
<dbReference type="eggNOG" id="COG0773">
    <property type="taxonomic scope" value="Bacteria"/>
</dbReference>
<dbReference type="HOGENOM" id="CLU_028104_2_0_0"/>
<dbReference type="OrthoDB" id="9804126at2"/>
<dbReference type="UniPathway" id="UPA00219"/>
<dbReference type="Proteomes" id="UP000000263">
    <property type="component" value="Chromosome"/>
</dbReference>
<dbReference type="GO" id="GO:0005737">
    <property type="term" value="C:cytoplasm"/>
    <property type="evidence" value="ECO:0007669"/>
    <property type="project" value="UniProtKB-SubCell"/>
</dbReference>
<dbReference type="GO" id="GO:0005524">
    <property type="term" value="F:ATP binding"/>
    <property type="evidence" value="ECO:0007669"/>
    <property type="project" value="UniProtKB-UniRule"/>
</dbReference>
<dbReference type="GO" id="GO:0008763">
    <property type="term" value="F:UDP-N-acetylmuramate-L-alanine ligase activity"/>
    <property type="evidence" value="ECO:0007669"/>
    <property type="project" value="UniProtKB-UniRule"/>
</dbReference>
<dbReference type="GO" id="GO:0051301">
    <property type="term" value="P:cell division"/>
    <property type="evidence" value="ECO:0007669"/>
    <property type="project" value="UniProtKB-KW"/>
</dbReference>
<dbReference type="GO" id="GO:0071555">
    <property type="term" value="P:cell wall organization"/>
    <property type="evidence" value="ECO:0007669"/>
    <property type="project" value="UniProtKB-KW"/>
</dbReference>
<dbReference type="GO" id="GO:0009252">
    <property type="term" value="P:peptidoglycan biosynthetic process"/>
    <property type="evidence" value="ECO:0007669"/>
    <property type="project" value="UniProtKB-UniRule"/>
</dbReference>
<dbReference type="GO" id="GO:0008360">
    <property type="term" value="P:regulation of cell shape"/>
    <property type="evidence" value="ECO:0007669"/>
    <property type="project" value="UniProtKB-KW"/>
</dbReference>
<dbReference type="Gene3D" id="3.90.190.20">
    <property type="entry name" value="Mur ligase, C-terminal domain"/>
    <property type="match status" value="1"/>
</dbReference>
<dbReference type="Gene3D" id="3.40.1190.10">
    <property type="entry name" value="Mur-like, catalytic domain"/>
    <property type="match status" value="1"/>
</dbReference>
<dbReference type="Gene3D" id="3.40.50.720">
    <property type="entry name" value="NAD(P)-binding Rossmann-like Domain"/>
    <property type="match status" value="1"/>
</dbReference>
<dbReference type="HAMAP" id="MF_00046">
    <property type="entry name" value="MurC"/>
    <property type="match status" value="1"/>
</dbReference>
<dbReference type="InterPro" id="IPR036565">
    <property type="entry name" value="Mur-like_cat_sf"/>
</dbReference>
<dbReference type="InterPro" id="IPR004101">
    <property type="entry name" value="Mur_ligase_C"/>
</dbReference>
<dbReference type="InterPro" id="IPR036615">
    <property type="entry name" value="Mur_ligase_C_dom_sf"/>
</dbReference>
<dbReference type="InterPro" id="IPR013221">
    <property type="entry name" value="Mur_ligase_cen"/>
</dbReference>
<dbReference type="InterPro" id="IPR000713">
    <property type="entry name" value="Mur_ligase_N"/>
</dbReference>
<dbReference type="InterPro" id="IPR050061">
    <property type="entry name" value="MurCDEF_pg_biosynth"/>
</dbReference>
<dbReference type="InterPro" id="IPR005758">
    <property type="entry name" value="UDP-N-AcMur_Ala_ligase_MurC"/>
</dbReference>
<dbReference type="NCBIfam" id="TIGR01082">
    <property type="entry name" value="murC"/>
    <property type="match status" value="1"/>
</dbReference>
<dbReference type="PANTHER" id="PTHR43445:SF3">
    <property type="entry name" value="UDP-N-ACETYLMURAMATE--L-ALANINE LIGASE"/>
    <property type="match status" value="1"/>
</dbReference>
<dbReference type="PANTHER" id="PTHR43445">
    <property type="entry name" value="UDP-N-ACETYLMURAMATE--L-ALANINE LIGASE-RELATED"/>
    <property type="match status" value="1"/>
</dbReference>
<dbReference type="Pfam" id="PF01225">
    <property type="entry name" value="Mur_ligase"/>
    <property type="match status" value="1"/>
</dbReference>
<dbReference type="Pfam" id="PF02875">
    <property type="entry name" value="Mur_ligase_C"/>
    <property type="match status" value="1"/>
</dbReference>
<dbReference type="Pfam" id="PF08245">
    <property type="entry name" value="Mur_ligase_M"/>
    <property type="match status" value="1"/>
</dbReference>
<dbReference type="SUPFAM" id="SSF51984">
    <property type="entry name" value="MurCD N-terminal domain"/>
    <property type="match status" value="1"/>
</dbReference>
<dbReference type="SUPFAM" id="SSF53623">
    <property type="entry name" value="MurD-like peptide ligases, catalytic domain"/>
    <property type="match status" value="1"/>
</dbReference>
<dbReference type="SUPFAM" id="SSF53244">
    <property type="entry name" value="MurD-like peptide ligases, peptide-binding domain"/>
    <property type="match status" value="1"/>
</dbReference>
<reference key="1">
    <citation type="submission" date="2007-08" db="EMBL/GenBank/DDBJ databases">
        <title>Complete sequence of Roseiflexus castenholzii DSM 13941.</title>
        <authorList>
            <consortium name="US DOE Joint Genome Institute"/>
            <person name="Copeland A."/>
            <person name="Lucas S."/>
            <person name="Lapidus A."/>
            <person name="Barry K."/>
            <person name="Glavina del Rio T."/>
            <person name="Dalin E."/>
            <person name="Tice H."/>
            <person name="Pitluck S."/>
            <person name="Thompson L.S."/>
            <person name="Brettin T."/>
            <person name="Bruce D."/>
            <person name="Detter J.C."/>
            <person name="Han C."/>
            <person name="Tapia R."/>
            <person name="Schmutz J."/>
            <person name="Larimer F."/>
            <person name="Land M."/>
            <person name="Hauser L."/>
            <person name="Kyrpides N."/>
            <person name="Mikhailova N."/>
            <person name="Bryant D.A."/>
            <person name="Hanada S."/>
            <person name="Tsukatani Y."/>
            <person name="Richardson P."/>
        </authorList>
    </citation>
    <scope>NUCLEOTIDE SEQUENCE [LARGE SCALE GENOMIC DNA]</scope>
    <source>
        <strain>DSM 13941 / HLO8</strain>
    </source>
</reference>
<comment type="function">
    <text evidence="1">Cell wall formation.</text>
</comment>
<comment type="catalytic activity">
    <reaction evidence="1">
        <text>UDP-N-acetyl-alpha-D-muramate + L-alanine + ATP = UDP-N-acetyl-alpha-D-muramoyl-L-alanine + ADP + phosphate + H(+)</text>
        <dbReference type="Rhea" id="RHEA:23372"/>
        <dbReference type="ChEBI" id="CHEBI:15378"/>
        <dbReference type="ChEBI" id="CHEBI:30616"/>
        <dbReference type="ChEBI" id="CHEBI:43474"/>
        <dbReference type="ChEBI" id="CHEBI:57972"/>
        <dbReference type="ChEBI" id="CHEBI:70757"/>
        <dbReference type="ChEBI" id="CHEBI:83898"/>
        <dbReference type="ChEBI" id="CHEBI:456216"/>
        <dbReference type="EC" id="6.3.2.8"/>
    </reaction>
</comment>
<comment type="pathway">
    <text evidence="1">Cell wall biogenesis; peptidoglycan biosynthesis.</text>
</comment>
<comment type="subcellular location">
    <subcellularLocation>
        <location evidence="1">Cytoplasm</location>
    </subcellularLocation>
</comment>
<comment type="similarity">
    <text evidence="1">Belongs to the MurCDEF family.</text>
</comment>
<gene>
    <name evidence="1" type="primary">murC</name>
    <name type="ordered locus">Rcas_1093</name>
</gene>
<accession>A7NI92</accession>
<evidence type="ECO:0000255" key="1">
    <source>
        <dbReference type="HAMAP-Rule" id="MF_00046"/>
    </source>
</evidence>
<proteinExistence type="inferred from homology"/>
<protein>
    <recommendedName>
        <fullName evidence="1">UDP-N-acetylmuramate--L-alanine ligase</fullName>
        <ecNumber evidence="1">6.3.2.8</ecNumber>
    </recommendedName>
    <alternativeName>
        <fullName evidence="1">UDP-N-acetylmuramoyl-L-alanine synthetase</fullName>
    </alternativeName>
</protein>
<name>MURC_ROSCS</name>
<keyword id="KW-0067">ATP-binding</keyword>
<keyword id="KW-0131">Cell cycle</keyword>
<keyword id="KW-0132">Cell division</keyword>
<keyword id="KW-0133">Cell shape</keyword>
<keyword id="KW-0961">Cell wall biogenesis/degradation</keyword>
<keyword id="KW-0963">Cytoplasm</keyword>
<keyword id="KW-0436">Ligase</keyword>
<keyword id="KW-0547">Nucleotide-binding</keyword>
<keyword id="KW-0573">Peptidoglycan synthesis</keyword>
<keyword id="KW-1185">Reference proteome</keyword>
<sequence>MHYHIVGIAGAGMSAIAHILLDQGHTVSGSDLQQNTLTAALEQRGARIRYGHEPAFVGDADRLVATSAVQDEHIELVEARKRGIPVLRRADLWREWSHGRQVVAVAGTHGKTTTTALIALMLTRAGIAPGFLIGGETPDLGVNARWGNPAAPLVVEADEYDRTFLALTPDIAIITNVEWEHVDIYPSPDEYEAAFRTFARQVAHPQRLIVCGDNAGARRVVGHPDAQQYGIEEAIARNPASCRLALMDWMAANVRYDGSMTHFDLWRYDRRTCGTRLEGMYTMRLVGDHNVQNALAAIAAATTLGIDRTAIGAALAEYRGARRRFDIKGEVNGITVIDDYAHHPTEVRATLAAARARFPQHRIVVYLQPHTFSRTYAMLDNWTHAFDAADIVRIGDVYPARETGEPRAAARALAGRIAHPDVEVVGDVATATATITALLQPGDLLLTLGAGDGYRVGEMALLALGQADDQSESSET</sequence>
<feature type="chain" id="PRO_0000336863" description="UDP-N-acetylmuramate--L-alanine ligase">
    <location>
        <begin position="1"/>
        <end position="476"/>
    </location>
</feature>
<feature type="binding site" evidence="1">
    <location>
        <begin position="107"/>
        <end position="113"/>
    </location>
    <ligand>
        <name>ATP</name>
        <dbReference type="ChEBI" id="CHEBI:30616"/>
    </ligand>
</feature>